<reference key="1">
    <citation type="journal article" date="2010" name="PLoS ONE">
        <title>The complete genome sequence of Cupriavidus metallidurans strain CH34, a master survivalist in harsh and anthropogenic environments.</title>
        <authorList>
            <person name="Janssen P.J."/>
            <person name="Van Houdt R."/>
            <person name="Moors H."/>
            <person name="Monsieurs P."/>
            <person name="Morin N."/>
            <person name="Michaux A."/>
            <person name="Benotmane M.A."/>
            <person name="Leys N."/>
            <person name="Vallaeys T."/>
            <person name="Lapidus A."/>
            <person name="Monchy S."/>
            <person name="Medigue C."/>
            <person name="Taghavi S."/>
            <person name="McCorkle S."/>
            <person name="Dunn J."/>
            <person name="van der Lelie D."/>
            <person name="Mergeay M."/>
        </authorList>
    </citation>
    <scope>NUCLEOTIDE SEQUENCE [LARGE SCALE GENOMIC DNA]</scope>
    <source>
        <strain>ATCC 43123 / DSM 2839 / NBRC 102507 / CH34</strain>
    </source>
</reference>
<sequence length="199" mass="21260">MSSDTRPALILGSSSPYRRELLSRLRIPFEVATPDIDETPLAGERPAATALRLSRLKAEAIAALHAGALVIGSDQVCTLDDQQIGKPGTHAKALAQLQLMRGRTVTFHSALCLLDGRTGEAQIADIQTHATFRNLSDAELDAYLRLETPYDCAGSAKVEGLGIMLLERVESDDPTALIGLPLIALTGMLRHAGYPCFGA</sequence>
<feature type="chain" id="PRO_0000267390" description="7-methyl-GTP pyrophosphatase">
    <location>
        <begin position="1"/>
        <end position="199"/>
    </location>
</feature>
<feature type="active site" description="Proton acceptor" evidence="1">
    <location>
        <position position="74"/>
    </location>
</feature>
<feature type="site" description="Important for substrate specificity" evidence="1">
    <location>
        <position position="17"/>
    </location>
</feature>
<feature type="site" description="Important for substrate specificity" evidence="1">
    <location>
        <position position="75"/>
    </location>
</feature>
<feature type="site" description="Important for substrate specificity" evidence="1">
    <location>
        <position position="159"/>
    </location>
</feature>
<dbReference type="EC" id="3.6.1.-" evidence="1"/>
<dbReference type="EMBL" id="CP000352">
    <property type="protein sequence ID" value="ABF09311.1"/>
    <property type="molecule type" value="Genomic_DNA"/>
</dbReference>
<dbReference type="RefSeq" id="WP_011517028.1">
    <property type="nucleotide sequence ID" value="NC_007973.1"/>
</dbReference>
<dbReference type="SMR" id="Q1LKL5"/>
<dbReference type="STRING" id="266264.Rmet_2434"/>
<dbReference type="KEGG" id="rme:Rmet_2434"/>
<dbReference type="eggNOG" id="COG0424">
    <property type="taxonomic scope" value="Bacteria"/>
</dbReference>
<dbReference type="HOGENOM" id="CLU_040416_1_0_4"/>
<dbReference type="Proteomes" id="UP000002429">
    <property type="component" value="Chromosome"/>
</dbReference>
<dbReference type="GO" id="GO:0005737">
    <property type="term" value="C:cytoplasm"/>
    <property type="evidence" value="ECO:0007669"/>
    <property type="project" value="UniProtKB-SubCell"/>
</dbReference>
<dbReference type="GO" id="GO:0047429">
    <property type="term" value="F:nucleoside triphosphate diphosphatase activity"/>
    <property type="evidence" value="ECO:0007669"/>
    <property type="project" value="InterPro"/>
</dbReference>
<dbReference type="GO" id="GO:0009117">
    <property type="term" value="P:nucleotide metabolic process"/>
    <property type="evidence" value="ECO:0007669"/>
    <property type="project" value="UniProtKB-KW"/>
</dbReference>
<dbReference type="CDD" id="cd00555">
    <property type="entry name" value="Maf"/>
    <property type="match status" value="1"/>
</dbReference>
<dbReference type="Gene3D" id="3.90.950.10">
    <property type="match status" value="1"/>
</dbReference>
<dbReference type="HAMAP" id="MF_00528">
    <property type="entry name" value="Maf"/>
    <property type="match status" value="1"/>
</dbReference>
<dbReference type="InterPro" id="IPR029001">
    <property type="entry name" value="ITPase-like_fam"/>
</dbReference>
<dbReference type="InterPro" id="IPR003697">
    <property type="entry name" value="Maf-like"/>
</dbReference>
<dbReference type="NCBIfam" id="TIGR00172">
    <property type="entry name" value="maf"/>
    <property type="match status" value="1"/>
</dbReference>
<dbReference type="PANTHER" id="PTHR43213">
    <property type="entry name" value="BIFUNCTIONAL DTTP/UTP PYROPHOSPHATASE/METHYLTRANSFERASE PROTEIN-RELATED"/>
    <property type="match status" value="1"/>
</dbReference>
<dbReference type="PANTHER" id="PTHR43213:SF5">
    <property type="entry name" value="BIFUNCTIONAL DTTP_UTP PYROPHOSPHATASE_METHYLTRANSFERASE PROTEIN-RELATED"/>
    <property type="match status" value="1"/>
</dbReference>
<dbReference type="Pfam" id="PF02545">
    <property type="entry name" value="Maf"/>
    <property type="match status" value="1"/>
</dbReference>
<dbReference type="PIRSF" id="PIRSF006305">
    <property type="entry name" value="Maf"/>
    <property type="match status" value="1"/>
</dbReference>
<dbReference type="SUPFAM" id="SSF52972">
    <property type="entry name" value="ITPase-like"/>
    <property type="match status" value="1"/>
</dbReference>
<protein>
    <recommendedName>
        <fullName evidence="1">7-methyl-GTP pyrophosphatase</fullName>
        <shortName evidence="1">m(7)GTP pyrophosphatase</shortName>
        <ecNumber evidence="1">3.6.1.-</ecNumber>
    </recommendedName>
</protein>
<proteinExistence type="inferred from homology"/>
<keyword id="KW-0963">Cytoplasm</keyword>
<keyword id="KW-0378">Hydrolase</keyword>
<keyword id="KW-0546">Nucleotide metabolism</keyword>
<keyword id="KW-1185">Reference proteome</keyword>
<name>NTPPB_CUPMC</name>
<accession>Q1LKL5</accession>
<comment type="function">
    <text evidence="1">Nucleoside triphosphate pyrophosphatase that hydrolyzes 7-methyl-GTP (m(7)GTP). May have a dual role in cell division arrest and in preventing the incorporation of modified nucleotides into cellular nucleic acids.</text>
</comment>
<comment type="catalytic activity">
    <reaction evidence="1">
        <text>N(7)-methyl-GTP + H2O = N(7)-methyl-GMP + diphosphate + H(+)</text>
        <dbReference type="Rhea" id="RHEA:58744"/>
        <dbReference type="ChEBI" id="CHEBI:15377"/>
        <dbReference type="ChEBI" id="CHEBI:15378"/>
        <dbReference type="ChEBI" id="CHEBI:33019"/>
        <dbReference type="ChEBI" id="CHEBI:58285"/>
        <dbReference type="ChEBI" id="CHEBI:87133"/>
    </reaction>
</comment>
<comment type="cofactor">
    <cofactor evidence="1">
        <name>a divalent metal cation</name>
        <dbReference type="ChEBI" id="CHEBI:60240"/>
    </cofactor>
</comment>
<comment type="subcellular location">
    <subcellularLocation>
        <location evidence="1">Cytoplasm</location>
    </subcellularLocation>
</comment>
<comment type="similarity">
    <text evidence="1">Belongs to the Maf family. YceF subfamily.</text>
</comment>
<organism>
    <name type="scientific">Cupriavidus metallidurans (strain ATCC 43123 / DSM 2839 / NBRC 102507 / CH34)</name>
    <name type="common">Ralstonia metallidurans</name>
    <dbReference type="NCBI Taxonomy" id="266264"/>
    <lineage>
        <taxon>Bacteria</taxon>
        <taxon>Pseudomonadati</taxon>
        <taxon>Pseudomonadota</taxon>
        <taxon>Betaproteobacteria</taxon>
        <taxon>Burkholderiales</taxon>
        <taxon>Burkholderiaceae</taxon>
        <taxon>Cupriavidus</taxon>
    </lineage>
</organism>
<gene>
    <name type="ordered locus">Rmet_2434</name>
</gene>
<evidence type="ECO:0000255" key="1">
    <source>
        <dbReference type="HAMAP-Rule" id="MF_00528"/>
    </source>
</evidence>